<organism>
    <name type="scientific">Thermococcus kodakarensis (strain ATCC BAA-918 / JCM 12380 / KOD1)</name>
    <name type="common">Pyrococcus kodakaraensis (strain KOD1)</name>
    <dbReference type="NCBI Taxonomy" id="69014"/>
    <lineage>
        <taxon>Archaea</taxon>
        <taxon>Methanobacteriati</taxon>
        <taxon>Methanobacteriota</taxon>
        <taxon>Thermococci</taxon>
        <taxon>Thermococcales</taxon>
        <taxon>Thermococcaceae</taxon>
        <taxon>Thermococcus</taxon>
    </lineage>
</organism>
<comment type="function">
    <text evidence="1">Deacylates the non-reducing end of diacetylchitobiose (GlcNAc2). Can also use N-acetylglucosamine (GlcNAc) and N-acetylchitotriose (GlcNAc3). Probably involved in chitin degradation.</text>
</comment>
<comment type="catalytic activity">
    <reaction evidence="1">
        <text>N,N'-diacetylchitobiose + H2O = beta-D-glucosaminyl-(1-&gt;4)-N-acetyl-D-glucosamine + acetate</text>
        <dbReference type="Rhea" id="RHEA:62168"/>
        <dbReference type="ChEBI" id="CHEBI:15377"/>
        <dbReference type="ChEBI" id="CHEBI:28681"/>
        <dbReference type="ChEBI" id="CHEBI:30089"/>
        <dbReference type="ChEBI" id="CHEBI:145478"/>
        <dbReference type="EC" id="3.5.1.136"/>
    </reaction>
</comment>
<comment type="biophysicochemical properties">
    <kinetics>
        <KM evidence="1">31.8 mM for GlcNAc2 (at pH 8 and at 70 degrees Celsius)</KM>
        <KM evidence="1">98 mM for GlcNAc3 (at pH 8 and at 70 degrees Celsius)</KM>
        <KM evidence="1">127 mM for GlcNAc (at pH 8 and at 70 degrees Celsius)</KM>
        <Vmax evidence="1">13.3 umol/min/mg enzyme with GlcNAc3 (at pH 8 and at 70 degrees Celsius)</Vmax>
        <Vmax evidence="1">48.5 umol/min/mg enzyme with GlcNAc2 (at pH 8 and at 70 degrees Celsius)</Vmax>
        <Vmax evidence="1">133.0 umol/min/mg enzyme with GlcNAc (at pH 8 and at 70 degrees Celsius)</Vmax>
    </kinetics>
    <phDependence>
        <text evidence="1">Optimum pH is 8.5.</text>
    </phDependence>
    <temperatureDependence>
        <text evidence="1">Optimum temperature is 75 degrees Celsius. Activity levels at 37 and 100 degrees Celsius are 20% of that observed at the optimal temperature.</text>
    </temperatureDependence>
</comment>
<comment type="pathway">
    <text evidence="1">Glycan degradation; chitin degradation.</text>
</comment>
<comment type="subunit">
    <text evidence="1">Homohexamer.</text>
</comment>
<comment type="subcellular location">
    <subcellularLocation>
        <location evidence="1">Cytoplasm</location>
    </subcellularLocation>
</comment>
<comment type="induction">
    <text evidence="1">By diacetylchitobiose (GlcNAc2).</text>
</comment>
<comment type="similarity">
    <text evidence="2">Belongs to the PIGL family.</text>
</comment>
<accession>Q6F4N1</accession>
<accession>Q5JDT4</accession>
<sequence>MVFEEFNNFDEAFSALLSKLDFKINEPFNDVKKVLCIEPHPDDCAIGLGGTIKKLTDSGIDVVYLLLTDGSMGTTDGEVSGHELALRRLEEEKRSAEILGVKKIHALDFGDTELPYTREVRKEIVTVIRKERPGIVLMPDPWLPYEGHPDHRHAGFLGIEAVSFAGLPNFNRSDLIAGLDPHSIQAVGFYYTHKPNYFVDISDVMEVKLRAVRTHESQFPEDVWELWEPYLRTIALYYGKMSGHRYAEGIRFVPGIFLHICPFAHVI</sequence>
<protein>
    <recommendedName>
        <fullName>Diacetylchitobiose deacetylase</fullName>
        <ecNumber evidence="1">3.5.1.136</ecNumber>
    </recommendedName>
    <alternativeName>
        <fullName>N-acetylchitobiose deacetylase</fullName>
    </alternativeName>
    <alternativeName>
        <fullName>Tk-Dac</fullName>
    </alternativeName>
</protein>
<proteinExistence type="evidence at protein level"/>
<keyword id="KW-0119">Carbohydrate metabolism</keyword>
<keyword id="KW-0146">Chitin degradation</keyword>
<keyword id="KW-0963">Cytoplasm</keyword>
<keyword id="KW-0903">Direct protein sequencing</keyword>
<keyword id="KW-0378">Hydrolase</keyword>
<keyword id="KW-0624">Polysaccharide degradation</keyword>
<keyword id="KW-1185">Reference proteome</keyword>
<gene>
    <name type="primary">dac</name>
    <name type="ordered locus">TK1764</name>
</gene>
<feature type="chain" id="PRO_0000386548" description="Diacetylchitobiose deacetylase">
    <location>
        <begin position="1"/>
        <end position="267"/>
    </location>
</feature>
<reference key="1">
    <citation type="journal article" date="2004" name="J. Biol. Chem.">
        <title>Concerted action of diacetylchitobiose deacetylase and exo-beta-D-glucosaminidase in a novel chitinolytic pathway in the hyperthermophilic archaeon Thermococcus kodakaraensis KOD1.</title>
        <authorList>
            <person name="Tanaka T."/>
            <person name="Fukui T."/>
            <person name="Fujiwara S."/>
            <person name="Atomi H."/>
            <person name="Imanaka T."/>
        </authorList>
    </citation>
    <scope>NUCLEOTIDE SEQUENCE [GENOMIC DNA]</scope>
    <scope>PROTEIN SEQUENCE OF 1-12</scope>
    <scope>FUNCTION</scope>
    <scope>CATALYTIC ACTIVITY</scope>
    <scope>BIOPHYSICOCHEMICAL PROPERTIES</scope>
    <scope>SUBUNIT</scope>
    <scope>SUBSTRATE SPECIFICITY</scope>
    <scope>INDUCTION</scope>
    <scope>PATHWAY</scope>
    <scope>SUBCELLULAR LOCATION</scope>
    <source>
        <strain>ATCC BAA-918 / JCM 12380 / KOD1</strain>
    </source>
</reference>
<reference key="2">
    <citation type="journal article" date="2005" name="Genome Res.">
        <title>Complete genome sequence of the hyperthermophilic archaeon Thermococcus kodakaraensis KOD1 and comparison with Pyrococcus genomes.</title>
        <authorList>
            <person name="Fukui T."/>
            <person name="Atomi H."/>
            <person name="Kanai T."/>
            <person name="Matsumi R."/>
            <person name="Fujiwara S."/>
            <person name="Imanaka T."/>
        </authorList>
    </citation>
    <scope>NUCLEOTIDE SEQUENCE [LARGE SCALE GENOMIC DNA]</scope>
    <source>
        <strain>ATCC BAA-918 / JCM 12380 / KOD1</strain>
    </source>
</reference>
<name>DCHI_THEKO</name>
<dbReference type="EC" id="3.5.1.136" evidence="1"/>
<dbReference type="EMBL" id="AB125969">
    <property type="protein sequence ID" value="BAD29713.1"/>
    <property type="molecule type" value="Genomic_DNA"/>
</dbReference>
<dbReference type="EMBL" id="AP006878">
    <property type="protein sequence ID" value="BAD85953.1"/>
    <property type="molecule type" value="Genomic_DNA"/>
</dbReference>
<dbReference type="RefSeq" id="WP_011250715.1">
    <property type="nucleotide sequence ID" value="NC_006624.1"/>
</dbReference>
<dbReference type="SMR" id="Q6F4N1"/>
<dbReference type="IntAct" id="Q6F4N1">
    <property type="interactions" value="1"/>
</dbReference>
<dbReference type="MINT" id="Q6F4N1"/>
<dbReference type="STRING" id="69014.TK1764"/>
<dbReference type="EnsemblBacteria" id="BAD85953">
    <property type="protein sequence ID" value="BAD85953"/>
    <property type="gene ID" value="TK1764"/>
</dbReference>
<dbReference type="GeneID" id="78448294"/>
<dbReference type="KEGG" id="tko:TK1764"/>
<dbReference type="PATRIC" id="fig|69014.16.peg.1720"/>
<dbReference type="eggNOG" id="arCOG03460">
    <property type="taxonomic scope" value="Archaea"/>
</dbReference>
<dbReference type="HOGENOM" id="CLU_049311_3_2_2"/>
<dbReference type="InParanoid" id="Q6F4N1"/>
<dbReference type="OrthoDB" id="70547at2157"/>
<dbReference type="PhylomeDB" id="Q6F4N1"/>
<dbReference type="BioCyc" id="MetaCyc:MONOMER-16776"/>
<dbReference type="BRENDA" id="3.5.1.105">
    <property type="organism ID" value="5246"/>
</dbReference>
<dbReference type="BRENDA" id="3.5.1.136">
    <property type="organism ID" value="5246"/>
</dbReference>
<dbReference type="BRENDA" id="3.5.1.33">
    <property type="organism ID" value="5246"/>
</dbReference>
<dbReference type="SABIO-RK" id="Q6F4N1"/>
<dbReference type="UniPathway" id="UPA00349"/>
<dbReference type="Proteomes" id="UP000000536">
    <property type="component" value="Chromosome"/>
</dbReference>
<dbReference type="GO" id="GO:0005737">
    <property type="term" value="C:cytoplasm"/>
    <property type="evidence" value="ECO:0007669"/>
    <property type="project" value="UniProtKB-SubCell"/>
</dbReference>
<dbReference type="GO" id="GO:0052773">
    <property type="term" value="F:diacetylchitobiose deacetylase activity"/>
    <property type="evidence" value="ECO:0007669"/>
    <property type="project" value="UniProtKB-EC"/>
</dbReference>
<dbReference type="GO" id="GO:0016811">
    <property type="term" value="F:hydrolase activity, acting on carbon-nitrogen (but not peptide) bonds, in linear amides"/>
    <property type="evidence" value="ECO:0000318"/>
    <property type="project" value="GO_Central"/>
</dbReference>
<dbReference type="GO" id="GO:0006032">
    <property type="term" value="P:chitin catabolic process"/>
    <property type="evidence" value="ECO:0007669"/>
    <property type="project" value="UniProtKB-UniPathway"/>
</dbReference>
<dbReference type="GO" id="GO:0000272">
    <property type="term" value="P:polysaccharide catabolic process"/>
    <property type="evidence" value="ECO:0007669"/>
    <property type="project" value="UniProtKB-KW"/>
</dbReference>
<dbReference type="Gene3D" id="3.40.50.10320">
    <property type="entry name" value="LmbE-like"/>
    <property type="match status" value="1"/>
</dbReference>
<dbReference type="InterPro" id="IPR003737">
    <property type="entry name" value="GlcNAc_PI_deacetylase-related"/>
</dbReference>
<dbReference type="InterPro" id="IPR024078">
    <property type="entry name" value="LmbE-like_dom_sf"/>
</dbReference>
<dbReference type="PANTHER" id="PTHR12993:SF11">
    <property type="entry name" value="N-ACETYLGLUCOSAMINYL-PHOSPHATIDYLINOSITOL DE-N-ACETYLASE"/>
    <property type="match status" value="1"/>
</dbReference>
<dbReference type="PANTHER" id="PTHR12993">
    <property type="entry name" value="N-ACETYLGLUCOSAMINYL-PHOSPHATIDYLINOSITOL DE-N-ACETYLASE-RELATED"/>
    <property type="match status" value="1"/>
</dbReference>
<dbReference type="Pfam" id="PF02585">
    <property type="entry name" value="PIG-L"/>
    <property type="match status" value="1"/>
</dbReference>
<dbReference type="SUPFAM" id="SSF102588">
    <property type="entry name" value="LmbE-like"/>
    <property type="match status" value="1"/>
</dbReference>
<evidence type="ECO:0000269" key="1">
    <source>
    </source>
</evidence>
<evidence type="ECO:0000305" key="2"/>